<accession>Q923M1</accession>
<accession>A9LAT3</accession>
<accession>A9LAT4</accession>
<protein>
    <recommendedName>
        <fullName>Mitochondrial peptide methionine sulfoxide reductase</fullName>
        <ecNumber evidence="3">1.8.4.11</ecNumber>
    </recommendedName>
    <alternativeName>
        <fullName>Peptide-methionine (S)-S-oxide reductase</fullName>
        <shortName>Peptide Met(O) reductase</shortName>
    </alternativeName>
    <alternativeName>
        <fullName>Protein-methionine-S-oxide reductase</fullName>
        <shortName>PMSR</shortName>
    </alternativeName>
</protein>
<comment type="function">
    <text evidence="1">Has an important function as a repair enzyme for proteins that have been inactivated by oxidation. Catalyzes the reversible oxidation-reduction of methionine sulfoxide in proteins to methionine (By similarity).</text>
</comment>
<comment type="catalytic activity">
    <reaction evidence="3">
        <text>L-methionyl-[protein] + [thioredoxin]-disulfide + H2O = L-methionyl-(S)-S-oxide-[protein] + [thioredoxin]-dithiol</text>
        <dbReference type="Rhea" id="RHEA:14217"/>
        <dbReference type="Rhea" id="RHEA-COMP:10698"/>
        <dbReference type="Rhea" id="RHEA-COMP:10700"/>
        <dbReference type="Rhea" id="RHEA-COMP:12313"/>
        <dbReference type="Rhea" id="RHEA-COMP:12315"/>
        <dbReference type="ChEBI" id="CHEBI:15377"/>
        <dbReference type="ChEBI" id="CHEBI:16044"/>
        <dbReference type="ChEBI" id="CHEBI:29950"/>
        <dbReference type="ChEBI" id="CHEBI:44120"/>
        <dbReference type="ChEBI" id="CHEBI:50058"/>
        <dbReference type="EC" id="1.8.4.11"/>
    </reaction>
</comment>
<comment type="catalytic activity">
    <reaction evidence="3">
        <text>[thioredoxin]-disulfide + L-methionine + H2O = L-methionine (S)-S-oxide + [thioredoxin]-dithiol</text>
        <dbReference type="Rhea" id="RHEA:19993"/>
        <dbReference type="Rhea" id="RHEA-COMP:10698"/>
        <dbReference type="Rhea" id="RHEA-COMP:10700"/>
        <dbReference type="ChEBI" id="CHEBI:15377"/>
        <dbReference type="ChEBI" id="CHEBI:29950"/>
        <dbReference type="ChEBI" id="CHEBI:50058"/>
        <dbReference type="ChEBI" id="CHEBI:57844"/>
        <dbReference type="ChEBI" id="CHEBI:58772"/>
        <dbReference type="EC" id="1.8.4.11"/>
    </reaction>
</comment>
<comment type="subcellular location">
    <molecule>Isoform 1</molecule>
    <subcellularLocation>
        <location>Mitochondrion</location>
    </subcellularLocation>
</comment>
<comment type="subcellular location">
    <molecule>Isoform 2</molecule>
    <subcellularLocation>
        <location>Mitochondrion</location>
    </subcellularLocation>
</comment>
<comment type="subcellular location">
    <molecule>Isoform 3</molecule>
    <subcellularLocation>
        <location>Mitochondrion</location>
    </subcellularLocation>
</comment>
<comment type="subcellular location">
    <molecule>Isoform 4</molecule>
    <subcellularLocation>
        <location>Cytoplasm</location>
    </subcellularLocation>
</comment>
<comment type="alternative products">
    <event type="alternative splicing"/>
    <isoform>
        <id>Q923M1-1</id>
        <name>1</name>
        <name>mito-MSRA</name>
        <sequence type="displayed"/>
    </isoform>
    <isoform>
        <id>Q923M1-3</id>
        <name>2</name>
        <name>MSRA2a</name>
        <sequence type="described" ref="VSP_041410"/>
    </isoform>
    <isoform>
        <id>Q923M1-4</id>
        <name>3</name>
        <name>MSRA2b1</name>
        <name>MSRA2b2</name>
        <sequence type="described" ref="VSP_041411 VSP_041412"/>
    </isoform>
    <isoform>
        <id>Q923M1-2</id>
        <name>4</name>
        <name>cyto-MSRA</name>
        <sequence type="described" ref="VSP_041413"/>
    </isoform>
</comment>
<comment type="tissue specificity">
    <text evidence="4">Isoform 2 is ubiquitously expressed.</text>
</comment>
<comment type="miscellaneous">
    <molecule>Isoform 1</molecule>
    <text>Mitochondrial.</text>
</comment>
<comment type="miscellaneous">
    <molecule>Isoform 2</molecule>
    <text evidence="6">Mitochondrial. Enzymatically active.</text>
</comment>
<comment type="miscellaneous">
    <molecule>Isoform 3</molecule>
    <text evidence="6">Mitochondrial. No enzymatic activity.</text>
</comment>
<comment type="miscellaneous">
    <molecule>Isoform 4</molecule>
    <text evidence="6">Cytoplasmic.</text>
</comment>
<comment type="similarity">
    <text evidence="6">Belongs to the MsrA Met sulfoxide reductase family.</text>
</comment>
<name>MSRA_RAT</name>
<gene>
    <name type="primary">Msra</name>
</gene>
<proteinExistence type="evidence at protein level"/>
<reference key="1">
    <citation type="journal article" date="2001" name="Biochem. J.">
        <title>Rat peptide methionine sulphoxide reductase: cloning of the cDNA, and down-regulation of gene expression and enzyme activity during aging.</title>
        <authorList>
            <person name="Petropoulos I."/>
            <person name="Mary J."/>
            <person name="Perichon M."/>
            <person name="Friguet B."/>
        </authorList>
    </citation>
    <scope>NUCLEOTIDE SEQUENCE [MRNA] (ISOFORM 1)</scope>
</reference>
<reference key="2">
    <citation type="journal article" date="2004" name="Genome Res.">
        <title>The status, quality, and expansion of the NIH full-length cDNA project: the Mammalian Gene Collection (MGC).</title>
        <authorList>
            <consortium name="The MGC Project Team"/>
        </authorList>
    </citation>
    <scope>NUCLEOTIDE SEQUENCE [LARGE SCALE MRNA] (ISOFORM 1)</scope>
    <source>
        <tissue>Kidney</tissue>
    </source>
</reference>
<reference key="3">
    <citation type="journal article" date="2007" name="Free Radic. Res.">
        <title>Identification of a new functional splice variant of the enzyme methionine sulphoxide reductase A (MSRA) expressed in rat vascular smooth muscle cells.</title>
        <authorList>
            <person name="Haenold R."/>
            <person name="Wassef R."/>
            <person name="Hansel A."/>
            <person name="Heinemann S.H."/>
            <person name="Hoshi T."/>
        </authorList>
    </citation>
    <scope>NUCLEOTIDE SEQUENCE [MRNA] OF 15-233 (ISOFORM 2)</scope>
    <scope>NUCLEOTIDE SEQUENCE [MRNA] OF 20-233 (ISOFORM 3)</scope>
    <scope>TISSUE SPECIFICITY</scope>
    <scope>SUBCELLULAR LOCATION</scope>
    <source>
        <tissue>Smooth muscle</tissue>
    </source>
</reference>
<reference key="4">
    <citation type="journal article" date="2003" name="Biochem. J.">
        <title>Subcellular localization of methionine sulphoxide reductase A (MsrA): evidence for mitochondrial and cytosolic isoforms in rat liver cells.</title>
        <authorList>
            <person name="Vougier S."/>
            <person name="Mary J."/>
            <person name="Friguet B."/>
        </authorList>
    </citation>
    <scope>PROTEIN SEQUENCE OF 28-47</scope>
    <scope>IDENTIFICATION BY MASS SPECTROMETRY</scope>
    <scope>SUBCELLULAR LOCATION</scope>
    <source>
        <tissue>Liver</tissue>
    </source>
</reference>
<keyword id="KW-0007">Acetylation</keyword>
<keyword id="KW-0025">Alternative splicing</keyword>
<keyword id="KW-0963">Cytoplasm</keyword>
<keyword id="KW-0903">Direct protein sequencing</keyword>
<keyword id="KW-1015">Disulfide bond</keyword>
<keyword id="KW-0496">Mitochondrion</keyword>
<keyword id="KW-0560">Oxidoreductase</keyword>
<keyword id="KW-0676">Redox-active center</keyword>
<keyword id="KW-1185">Reference proteome</keyword>
<keyword id="KW-0809">Transit peptide</keyword>
<dbReference type="EC" id="1.8.4.11" evidence="3"/>
<dbReference type="EMBL" id="AY005464">
    <property type="protein sequence ID" value="AAF99392.1"/>
    <property type="molecule type" value="mRNA"/>
</dbReference>
<dbReference type="EMBL" id="BC087009">
    <property type="protein sequence ID" value="AAH87009.1"/>
    <property type="molecule type" value="mRNA"/>
</dbReference>
<dbReference type="EMBL" id="DQ989019">
    <property type="protein sequence ID" value="ABL73891.1"/>
    <property type="molecule type" value="mRNA"/>
</dbReference>
<dbReference type="EMBL" id="DQ989020">
    <property type="protein sequence ID" value="ABL73892.1"/>
    <property type="molecule type" value="mRNA"/>
</dbReference>
<dbReference type="EMBL" id="DQ989021">
    <property type="protein sequence ID" value="ABL73893.1"/>
    <property type="molecule type" value="mRNA"/>
</dbReference>
<dbReference type="RefSeq" id="NP_445759.1">
    <molecule id="Q923M1-1"/>
    <property type="nucleotide sequence ID" value="NM_053307.2"/>
</dbReference>
<dbReference type="RefSeq" id="XP_008768967.2">
    <property type="nucleotide sequence ID" value="XM_008770745.2"/>
</dbReference>
<dbReference type="RefSeq" id="XP_038949142.1">
    <molecule id="Q923M1-1"/>
    <property type="nucleotide sequence ID" value="XM_039093214.2"/>
</dbReference>
<dbReference type="SMR" id="Q923M1"/>
<dbReference type="FunCoup" id="Q923M1">
    <property type="interactions" value="1185"/>
</dbReference>
<dbReference type="STRING" id="10116.ENSRNOP00000067242"/>
<dbReference type="ChEMBL" id="CHEMBL3509605"/>
<dbReference type="GlyGen" id="Q923M1">
    <property type="glycosylation" value="1 site"/>
</dbReference>
<dbReference type="iPTMnet" id="Q923M1"/>
<dbReference type="PhosphoSitePlus" id="Q923M1"/>
<dbReference type="Ensembl" id="ENSRNOT00000102126.1">
    <molecule id="Q923M1-1"/>
    <property type="protein sequence ID" value="ENSRNOP00000097940.1"/>
    <property type="gene ID" value="ENSRNOG00000012440.9"/>
</dbReference>
<dbReference type="GeneID" id="29447"/>
<dbReference type="KEGG" id="rno:29447"/>
<dbReference type="UCSC" id="RGD:70979">
    <molecule id="Q923M1-1"/>
    <property type="organism name" value="rat"/>
</dbReference>
<dbReference type="AGR" id="RGD:70979"/>
<dbReference type="CTD" id="4482"/>
<dbReference type="RGD" id="70979">
    <property type="gene designation" value="Msra"/>
</dbReference>
<dbReference type="GeneTree" id="ENSGT00390000003823"/>
<dbReference type="InParanoid" id="Q923M1"/>
<dbReference type="OrthoDB" id="19667at9989"/>
<dbReference type="BRENDA" id="1.8.4.11">
    <property type="organism ID" value="5301"/>
</dbReference>
<dbReference type="Reactome" id="R-RNO-5676934">
    <property type="pathway name" value="Protein repair"/>
</dbReference>
<dbReference type="PRO" id="PR:Q923M1"/>
<dbReference type="Proteomes" id="UP000002494">
    <property type="component" value="Chromosome 15"/>
</dbReference>
<dbReference type="GO" id="GO:0005737">
    <property type="term" value="C:cytoplasm"/>
    <property type="evidence" value="ECO:0000318"/>
    <property type="project" value="GO_Central"/>
</dbReference>
<dbReference type="GO" id="GO:0005739">
    <property type="term" value="C:mitochondrion"/>
    <property type="evidence" value="ECO:0007669"/>
    <property type="project" value="UniProtKB-SubCell"/>
</dbReference>
<dbReference type="GO" id="GO:0036456">
    <property type="term" value="F:L-methionine-(S)-S-oxide reductase activity"/>
    <property type="evidence" value="ECO:0000318"/>
    <property type="project" value="GO_Central"/>
</dbReference>
<dbReference type="GO" id="GO:0008113">
    <property type="term" value="F:peptide-methionine (S)-S-oxide reductase activity"/>
    <property type="evidence" value="ECO:0000314"/>
    <property type="project" value="RGD"/>
</dbReference>
<dbReference type="GO" id="GO:0034599">
    <property type="term" value="P:cellular response to oxidative stress"/>
    <property type="evidence" value="ECO:0000318"/>
    <property type="project" value="GO_Central"/>
</dbReference>
<dbReference type="FunFam" id="3.30.1060.10:FF:000001">
    <property type="entry name" value="Peptide methionine sulfoxide reductase MsrA"/>
    <property type="match status" value="1"/>
</dbReference>
<dbReference type="Gene3D" id="3.30.1060.10">
    <property type="entry name" value="Peptide methionine sulphoxide reductase MsrA"/>
    <property type="match status" value="1"/>
</dbReference>
<dbReference type="HAMAP" id="MF_01401">
    <property type="entry name" value="MsrA"/>
    <property type="match status" value="1"/>
</dbReference>
<dbReference type="InterPro" id="IPR002569">
    <property type="entry name" value="Met_Sox_Rdtase_MsrA_dom"/>
</dbReference>
<dbReference type="InterPro" id="IPR036509">
    <property type="entry name" value="Met_Sox_Rdtase_MsrA_sf"/>
</dbReference>
<dbReference type="InterPro" id="IPR050162">
    <property type="entry name" value="MsrA_MetSO_reductase"/>
</dbReference>
<dbReference type="NCBIfam" id="TIGR00401">
    <property type="entry name" value="msrA"/>
    <property type="match status" value="1"/>
</dbReference>
<dbReference type="PANTHER" id="PTHR42799">
    <property type="entry name" value="MITOCHONDRIAL PEPTIDE METHIONINE SULFOXIDE REDUCTASE"/>
    <property type="match status" value="1"/>
</dbReference>
<dbReference type="PANTHER" id="PTHR42799:SF2">
    <property type="entry name" value="MITOCHONDRIAL PEPTIDE METHIONINE SULFOXIDE REDUCTASE"/>
    <property type="match status" value="1"/>
</dbReference>
<dbReference type="Pfam" id="PF01625">
    <property type="entry name" value="PMSR"/>
    <property type="match status" value="1"/>
</dbReference>
<dbReference type="SUPFAM" id="SSF55068">
    <property type="entry name" value="Peptide methionine sulfoxide reductase"/>
    <property type="match status" value="1"/>
</dbReference>
<feature type="transit peptide" description="Mitochondrion" evidence="1">
    <location>
        <begin position="1"/>
        <end position="20"/>
    </location>
</feature>
<feature type="chain" id="PRO_0000138628" description="Mitochondrial peptide methionine sulfoxide reductase">
    <location>
        <begin position="21"/>
        <end position="233"/>
    </location>
</feature>
<feature type="active site" description="Cysteine sulfenic acid (-SOH) intermediate" evidence="2">
    <location>
        <position position="72"/>
    </location>
</feature>
<feature type="modified residue" description="N6-acetyllysine; alternate" evidence="3">
    <location>
        <position position="104"/>
    </location>
</feature>
<feature type="modified residue" description="N6-succinyllysine; alternate" evidence="3">
    <location>
        <position position="104"/>
    </location>
</feature>
<feature type="modified residue" description="N6-acetyllysine; alternate" evidence="3">
    <location>
        <position position="183"/>
    </location>
</feature>
<feature type="modified residue" description="N6-succinyllysine; alternate" evidence="3">
    <location>
        <position position="183"/>
    </location>
</feature>
<feature type="disulfide bond" description="Redox-active; alternate" evidence="2">
    <location>
        <begin position="72"/>
        <end position="218"/>
    </location>
</feature>
<feature type="disulfide bond" description="Redox-active; alternate" evidence="2">
    <location>
        <begin position="218"/>
        <end position="227"/>
    </location>
</feature>
<feature type="splice variant" id="VSP_041413" description="In isoform 4." evidence="6">
    <original>MLSASRRTLQLLSSSIPVRMMGDSSSKVISAEEALPGRTESIPVAA</original>
    <variation>MEQQPQA</variation>
    <location>
        <begin position="1"/>
        <end position="46"/>
    </location>
</feature>
<feature type="splice variant" id="VSP_041410" description="In isoform 2." evidence="5">
    <original>A</original>
    <variation>AALPTPSLSPNQKLNYFVWKEVPGKHSWP</variation>
    <location>
        <position position="46"/>
    </location>
</feature>
<feature type="splice variant" id="VSP_041411" description="In isoform 3." evidence="5">
    <original>KHHVSGNRTV</original>
    <variation>SCHPKLHPSN</variation>
    <location>
        <begin position="47"/>
        <end position="56"/>
    </location>
</feature>
<feature type="splice variant" id="VSP_041412" description="In isoform 3." evidence="5">
    <location>
        <begin position="57"/>
        <end position="233"/>
    </location>
</feature>
<sequence>MLSASRRTLQLLSSSIPVRMMGDSSSKVISAEEALPGRTESIPVAAKHHVSGNRTVEPFPEGTQMAVFGMGCFWGAERKFWLLKGVYSTQVGFAGGYTRNPTYKEVCSEKTGHAEVVRVVYRPEHVSFEELLKVFWENHDPTQGMRQGNDCGTQYRSAVYPTSAVQMEAALKSKEEYQKVLSKHGFGPITTDIREGQVFYYAEDYHQQYLSKNPDGYCGLGGTGVSCPTAIKK</sequence>
<evidence type="ECO:0000250" key="1"/>
<evidence type="ECO:0000250" key="2">
    <source>
        <dbReference type="UniProtKB" id="P0A744"/>
    </source>
</evidence>
<evidence type="ECO:0000250" key="3">
    <source>
        <dbReference type="UniProtKB" id="Q9D6Y7"/>
    </source>
</evidence>
<evidence type="ECO:0000269" key="4">
    <source>
    </source>
</evidence>
<evidence type="ECO:0000303" key="5">
    <source>
    </source>
</evidence>
<evidence type="ECO:0000305" key="6"/>
<organism>
    <name type="scientific">Rattus norvegicus</name>
    <name type="common">Rat</name>
    <dbReference type="NCBI Taxonomy" id="10116"/>
    <lineage>
        <taxon>Eukaryota</taxon>
        <taxon>Metazoa</taxon>
        <taxon>Chordata</taxon>
        <taxon>Craniata</taxon>
        <taxon>Vertebrata</taxon>
        <taxon>Euteleostomi</taxon>
        <taxon>Mammalia</taxon>
        <taxon>Eutheria</taxon>
        <taxon>Euarchontoglires</taxon>
        <taxon>Glires</taxon>
        <taxon>Rodentia</taxon>
        <taxon>Myomorpha</taxon>
        <taxon>Muroidea</taxon>
        <taxon>Muridae</taxon>
        <taxon>Murinae</taxon>
        <taxon>Rattus</taxon>
    </lineage>
</organism>